<comment type="function">
    <text evidence="3 6">Leghemoglobin that reversibly binds oxygen O(2) through a pentacoordinated heme iron (By similarity). In root nodules, facilitates the diffusion of oxygen to the bacteroids while preventing the bacterial nitrogenase from being inactivated by buffering dioxygen, nitric oxide and carbon monoxide, and promoting the formation of reactive oxygen species (ROS, e.g. H(2)O(2)) (By similarity). This role is essential for symbiotic nitrogen fixation (SNF) (By similarity).</text>
</comment>
<comment type="subunit">
    <text evidence="4">Monomer.</text>
</comment>
<comment type="subcellular location">
    <subcellularLocation>
        <location evidence="4">Cytoplasm</location>
        <location evidence="4">Cytosol</location>
    </subcellularLocation>
    <subcellularLocation>
        <location evidence="4">Nucleus</location>
    </subcellularLocation>
</comment>
<comment type="tissue specificity">
    <text evidence="9">Root nodules.</text>
</comment>
<comment type="PTM">
    <text evidence="1">Nitrated mainly at Tyr-31 and, to a lower extent, at Tyr-26 and Tyr-134, in effective nodules and particularly in hypoxic conditions; this mechanism may play a protective role in the symbiosis by buffering toxic peroxynitrite NO(2)(-) (By similarity). Nitration level decrease during nodule senescence (By similarity).</text>
</comment>
<comment type="PTM">
    <text evidence="5">Phosphorylation at Ser-46 disrupts the molecular environment of its porphyrin ring oxygen binding pocket, thus leading to a reduced oxygen consumption and to the delivery of oxygen O(2) to symbiosomes.</text>
</comment>
<comment type="similarity">
    <text evidence="9">Belongs to the plant globin family.</text>
</comment>
<dbReference type="EMBL" id="AB004549">
    <property type="protein sequence ID" value="BAA20415.1"/>
    <property type="molecule type" value="Genomic_DNA"/>
</dbReference>
<dbReference type="SMR" id="O04939"/>
<dbReference type="eggNOG" id="KOG3378">
    <property type="taxonomic scope" value="Eukaryota"/>
</dbReference>
<dbReference type="GO" id="GO:0005829">
    <property type="term" value="C:cytosol"/>
    <property type="evidence" value="ECO:0007669"/>
    <property type="project" value="UniProtKB-SubCell"/>
</dbReference>
<dbReference type="GO" id="GO:0005634">
    <property type="term" value="C:nucleus"/>
    <property type="evidence" value="ECO:0007669"/>
    <property type="project" value="UniProtKB-SubCell"/>
</dbReference>
<dbReference type="GO" id="GO:0020037">
    <property type="term" value="F:heme binding"/>
    <property type="evidence" value="ECO:0007669"/>
    <property type="project" value="InterPro"/>
</dbReference>
<dbReference type="GO" id="GO:0046872">
    <property type="term" value="F:metal ion binding"/>
    <property type="evidence" value="ECO:0007669"/>
    <property type="project" value="UniProtKB-KW"/>
</dbReference>
<dbReference type="GO" id="GO:0019825">
    <property type="term" value="F:oxygen binding"/>
    <property type="evidence" value="ECO:0007669"/>
    <property type="project" value="InterPro"/>
</dbReference>
<dbReference type="GO" id="GO:0005344">
    <property type="term" value="F:oxygen carrier activity"/>
    <property type="evidence" value="ECO:0007669"/>
    <property type="project" value="UniProtKB-KW"/>
</dbReference>
<dbReference type="GO" id="GO:0009877">
    <property type="term" value="P:nodulation"/>
    <property type="evidence" value="ECO:0007669"/>
    <property type="project" value="UniProtKB-KW"/>
</dbReference>
<dbReference type="Gene3D" id="1.10.490.10">
    <property type="entry name" value="Globins"/>
    <property type="match status" value="1"/>
</dbReference>
<dbReference type="InterPro" id="IPR000971">
    <property type="entry name" value="Globin"/>
</dbReference>
<dbReference type="InterPro" id="IPR009050">
    <property type="entry name" value="Globin-like_sf"/>
</dbReference>
<dbReference type="InterPro" id="IPR012292">
    <property type="entry name" value="Globin/Proto"/>
</dbReference>
<dbReference type="InterPro" id="IPR001032">
    <property type="entry name" value="Leghaemoglobin-like"/>
</dbReference>
<dbReference type="InterPro" id="IPR019824">
    <property type="entry name" value="Leghaemoglobin_Fe_BS"/>
</dbReference>
<dbReference type="PANTHER" id="PTHR22924">
    <property type="entry name" value="LEGHEMOGLOBIN-RELATED"/>
    <property type="match status" value="1"/>
</dbReference>
<dbReference type="PANTHER" id="PTHR22924:SF92">
    <property type="entry name" value="NON-SYMBIOTIC HEMOGLOBIN 2"/>
    <property type="match status" value="1"/>
</dbReference>
<dbReference type="Pfam" id="PF00042">
    <property type="entry name" value="Globin"/>
    <property type="match status" value="1"/>
</dbReference>
<dbReference type="PRINTS" id="PR00188">
    <property type="entry name" value="PLANTGLOBIN"/>
</dbReference>
<dbReference type="SUPFAM" id="SSF46458">
    <property type="entry name" value="Globin-like"/>
    <property type="match status" value="1"/>
</dbReference>
<dbReference type="PROSITE" id="PS01033">
    <property type="entry name" value="GLOBIN"/>
    <property type="match status" value="1"/>
</dbReference>
<dbReference type="PROSITE" id="PS00208">
    <property type="entry name" value="PLANT_GLOBIN"/>
    <property type="match status" value="1"/>
</dbReference>
<protein>
    <recommendedName>
        <fullName evidence="8">Leghemoglobin</fullName>
    </recommendedName>
</protein>
<reference key="1">
    <citation type="journal article" date="1998" name="Plant Cell Physiol.">
        <title>Detection of the leghemoglobin gene on two chromosomes of Phaseolus vulgaris by in situ PCR linked-fluorescent in situ hybridization (FISH).</title>
        <authorList>
            <person name="Uchiumi T."/>
            <person name="Kuwashiro R."/>
            <person name="Miyamoto J."/>
            <person name="Abe M."/>
            <person name="Higashi S."/>
        </authorList>
    </citation>
    <scope>NUCLEOTIDE SEQUENCE [GENOMIC DNA]</scope>
    <source>
        <strain>cv. Keystone</strain>
    </source>
</reference>
<accession>O04939</accession>
<evidence type="ECO:0000250" key="1">
    <source>
        <dbReference type="UniProtKB" id="P02234"/>
    </source>
</evidence>
<evidence type="ECO:0000250" key="2">
    <source>
        <dbReference type="UniProtKB" id="P02236"/>
    </source>
</evidence>
<evidence type="ECO:0000250" key="3">
    <source>
        <dbReference type="UniProtKB" id="P02237"/>
    </source>
</evidence>
<evidence type="ECO:0000250" key="4">
    <source>
        <dbReference type="UniProtKB" id="P02240"/>
    </source>
</evidence>
<evidence type="ECO:0000250" key="5">
    <source>
        <dbReference type="UniProtKB" id="Q3C1F7"/>
    </source>
</evidence>
<evidence type="ECO:0000250" key="6">
    <source>
        <dbReference type="UniProtKB" id="Q43296"/>
    </source>
</evidence>
<evidence type="ECO:0000255" key="7">
    <source>
        <dbReference type="PROSITE-ProRule" id="PRU00238"/>
    </source>
</evidence>
<evidence type="ECO:0000303" key="8">
    <source>
    </source>
</evidence>
<evidence type="ECO:0000305" key="9"/>
<name>LGB2_PHAVU</name>
<organism>
    <name type="scientific">Phaseolus vulgaris</name>
    <name type="common">Kidney bean</name>
    <name type="synonym">French bean</name>
    <dbReference type="NCBI Taxonomy" id="3885"/>
    <lineage>
        <taxon>Eukaryota</taxon>
        <taxon>Viridiplantae</taxon>
        <taxon>Streptophyta</taxon>
        <taxon>Embryophyta</taxon>
        <taxon>Tracheophyta</taxon>
        <taxon>Spermatophyta</taxon>
        <taxon>Magnoliopsida</taxon>
        <taxon>eudicotyledons</taxon>
        <taxon>Gunneridae</taxon>
        <taxon>Pentapetalae</taxon>
        <taxon>rosids</taxon>
        <taxon>fabids</taxon>
        <taxon>Fabales</taxon>
        <taxon>Fabaceae</taxon>
        <taxon>Papilionoideae</taxon>
        <taxon>50 kb inversion clade</taxon>
        <taxon>NPAAA clade</taxon>
        <taxon>indigoferoid/millettioid clade</taxon>
        <taxon>Phaseoleae</taxon>
        <taxon>Phaseolus</taxon>
    </lineage>
</organism>
<keyword id="KW-0963">Cytoplasm</keyword>
<keyword id="KW-0349">Heme</keyword>
<keyword id="KW-0408">Iron</keyword>
<keyword id="KW-0479">Metal-binding</keyword>
<keyword id="KW-0944">Nitration</keyword>
<keyword id="KW-0535">Nitrogen fixation</keyword>
<keyword id="KW-0536">Nodulation</keyword>
<keyword id="KW-0539">Nucleus</keyword>
<keyword id="KW-0561">Oxygen transport</keyword>
<keyword id="KW-0597">Phosphoprotein</keyword>
<keyword id="KW-0813">Transport</keyword>
<feature type="initiator methionine" description="Removed" evidence="2">
    <location>
        <position position="1"/>
    </location>
</feature>
<feature type="chain" id="PRO_0000192998" description="Leghemoglobin">
    <location>
        <begin position="2"/>
        <end position="146"/>
    </location>
</feature>
<feature type="domain" description="Globin" evidence="7">
    <location>
        <begin position="3"/>
        <end position="146"/>
    </location>
</feature>
<feature type="binding site" evidence="4">
    <location>
        <position position="46"/>
    </location>
    <ligand>
        <name>heme b</name>
        <dbReference type="ChEBI" id="CHEBI:60344"/>
    </ligand>
</feature>
<feature type="binding site" evidence="4">
    <location>
        <position position="62"/>
    </location>
    <ligand>
        <name>O2</name>
        <dbReference type="ChEBI" id="CHEBI:15379"/>
    </ligand>
</feature>
<feature type="binding site" description="proximal binding residue" evidence="7">
    <location>
        <position position="93"/>
    </location>
    <ligand>
        <name>heme b</name>
        <dbReference type="ChEBI" id="CHEBI:60344"/>
    </ligand>
    <ligandPart>
        <name>Fe</name>
        <dbReference type="ChEBI" id="CHEBI:18248"/>
    </ligandPart>
</feature>
<feature type="binding site" evidence="4">
    <location>
        <position position="96"/>
    </location>
    <ligand>
        <name>heme b</name>
        <dbReference type="ChEBI" id="CHEBI:60344"/>
    </ligand>
</feature>
<feature type="modified residue" description="Nitrated tyrosine" evidence="1">
    <location>
        <position position="26"/>
    </location>
</feature>
<feature type="modified residue" description="Nitrated tyrosine" evidence="1">
    <location>
        <position position="31"/>
    </location>
</feature>
<feature type="modified residue" description="Phosphoserine" evidence="5">
    <location>
        <position position="46"/>
    </location>
</feature>
<feature type="modified residue" description="Nitrated tyrosine" evidence="1">
    <location>
        <position position="134"/>
    </location>
</feature>
<sequence length="146" mass="15668">MGAFTEKQEALVNSSWEAFKGNIPQYSVVFYTSILEKAPAAKNLFSFLANGVDPTNPKLTAHAESLFGLVRDSAAQLRANGAVVADAALGSIHSQKALNDSQFLVVKEALLKTLKEAVGDKWTDELSTALELAYDEFAAGIKKAYA</sequence>
<proteinExistence type="inferred from homology"/>